<gene>
    <name type="primary">SSP2</name>
    <name type="ORF">PY03052</name>
</gene>
<comment type="subcellular location">
    <subcellularLocation>
        <location>Cell membrane</location>
        <topology>Single-pass membrane protein</topology>
    </subcellularLocation>
</comment>
<organism>
    <name type="scientific">Plasmodium yoelii yoelii</name>
    <dbReference type="NCBI Taxonomy" id="73239"/>
    <lineage>
        <taxon>Eukaryota</taxon>
        <taxon>Sar</taxon>
        <taxon>Alveolata</taxon>
        <taxon>Apicomplexa</taxon>
        <taxon>Aconoidasida</taxon>
        <taxon>Haemosporida</taxon>
        <taxon>Plasmodiidae</taxon>
        <taxon>Plasmodium</taxon>
        <taxon>Plasmodium (Vinckeia)</taxon>
    </lineage>
</organism>
<feature type="signal peptide" evidence="1">
    <location>
        <begin position="1"/>
        <end position="22"/>
    </location>
</feature>
<feature type="chain" id="PRO_0000024627" description="Sporozoite surface protein 2">
    <location>
        <begin position="23"/>
        <end position="827"/>
    </location>
</feature>
<feature type="transmembrane region" description="Helical" evidence="1">
    <location>
        <begin position="764"/>
        <end position="787"/>
    </location>
</feature>
<feature type="domain" description="VWFA" evidence="3">
    <location>
        <begin position="43"/>
        <end position="228"/>
    </location>
</feature>
<feature type="domain" description="TSP type-1" evidence="2">
    <location>
        <begin position="235"/>
        <end position="281"/>
    </location>
</feature>
<feature type="repeat" description="1">
    <location>
        <begin position="603"/>
        <end position="613"/>
    </location>
</feature>
<feature type="repeat" description="2">
    <location>
        <begin position="614"/>
        <end position="624"/>
    </location>
</feature>
<feature type="region of interest" description="Disordered" evidence="4">
    <location>
        <begin position="278"/>
        <end position="761"/>
    </location>
</feature>
<feature type="region of interest" description="29 X 3 AA tandem repeats">
    <location>
        <begin position="306"/>
        <end position="392"/>
    </location>
</feature>
<feature type="region of interest" description="20 tandem tetra-/hexapeptide repeats">
    <location>
        <begin position="402"/>
        <end position="514"/>
    </location>
</feature>
<feature type="region of interest" description="2 X 11 AA tandem repeats">
    <location>
        <begin position="603"/>
        <end position="624"/>
    </location>
</feature>
<feature type="compositionally biased region" description="Low complexity" evidence="4">
    <location>
        <begin position="301"/>
        <end position="388"/>
    </location>
</feature>
<feature type="compositionally biased region" description="Basic residues" evidence="4">
    <location>
        <begin position="392"/>
        <end position="407"/>
    </location>
</feature>
<feature type="compositionally biased region" description="Pro residues" evidence="4">
    <location>
        <begin position="408"/>
        <end position="464"/>
    </location>
</feature>
<feature type="compositionally biased region" description="Low complexity" evidence="4">
    <location>
        <begin position="465"/>
        <end position="567"/>
    </location>
</feature>
<feature type="compositionally biased region" description="Polar residues" evidence="4">
    <location>
        <begin position="657"/>
        <end position="671"/>
    </location>
</feature>
<feature type="compositionally biased region" description="Basic and acidic residues" evidence="4">
    <location>
        <begin position="709"/>
        <end position="724"/>
    </location>
</feature>
<feature type="disulfide bond" evidence="2">
    <location>
        <begin position="238"/>
        <end position="267"/>
    </location>
</feature>
<feature type="disulfide bond" evidence="2">
    <location>
        <begin position="247"/>
        <end position="275"/>
    </location>
</feature>
<feature type="disulfide bond" evidence="2">
    <location>
        <begin position="251"/>
        <end position="280"/>
    </location>
</feature>
<feature type="sequence conflict" description="In Ref. 1; AAA29768." evidence="5" ref="1">
    <original>PN</original>
    <variation>H</variation>
    <location>
        <begin position="390"/>
        <end position="391"/>
    </location>
</feature>
<feature type="sequence conflict" description="In Ref. 1; AAA29768." evidence="5" ref="1">
    <original>K</original>
    <variation>R</variation>
    <location>
        <position position="394"/>
    </location>
</feature>
<dbReference type="EMBL" id="M84732">
    <property type="protein sequence ID" value="AAA29768.1"/>
    <property type="molecule type" value="Genomic_DNA"/>
</dbReference>
<dbReference type="EMBL" id="AABL01000864">
    <property type="protein sequence ID" value="EAA22580.1"/>
    <property type="molecule type" value="Genomic_DNA"/>
</dbReference>
<dbReference type="PIR" id="A45559">
    <property type="entry name" value="A45559"/>
</dbReference>
<dbReference type="SMR" id="Q01443"/>
<dbReference type="FunCoup" id="Q01443">
    <property type="interactions" value="702"/>
</dbReference>
<dbReference type="STRING" id="73239.Q01443"/>
<dbReference type="PaxDb" id="73239-Q01443"/>
<dbReference type="EnsemblProtists" id="EAA22580">
    <property type="protein sequence ID" value="EAA22580"/>
    <property type="gene ID" value="EAA22580"/>
</dbReference>
<dbReference type="KEGG" id="pyo:PY17X_1354800"/>
<dbReference type="VEuPathDB" id="PlasmoDB:Py17XNL_001303393"/>
<dbReference type="InParanoid" id="Q01443"/>
<dbReference type="OrthoDB" id="6362401at2759"/>
<dbReference type="Proteomes" id="UP000008553">
    <property type="component" value="Unassembled WGS sequence"/>
</dbReference>
<dbReference type="GO" id="GO:0005886">
    <property type="term" value="C:plasma membrane"/>
    <property type="evidence" value="ECO:0007669"/>
    <property type="project" value="UniProtKB-SubCell"/>
</dbReference>
<dbReference type="CDD" id="cd01471">
    <property type="entry name" value="vWA_micronemal_protein"/>
    <property type="match status" value="1"/>
</dbReference>
<dbReference type="Gene3D" id="2.20.100.10">
    <property type="entry name" value="Thrombospondin type-1 (TSP1) repeat"/>
    <property type="match status" value="1"/>
</dbReference>
<dbReference type="Gene3D" id="3.40.50.410">
    <property type="entry name" value="von Willebrand factor, type A domain"/>
    <property type="match status" value="1"/>
</dbReference>
<dbReference type="InterPro" id="IPR000884">
    <property type="entry name" value="TSP1_rpt"/>
</dbReference>
<dbReference type="InterPro" id="IPR036383">
    <property type="entry name" value="TSP1_rpt_sf"/>
</dbReference>
<dbReference type="InterPro" id="IPR002035">
    <property type="entry name" value="VWF_A"/>
</dbReference>
<dbReference type="InterPro" id="IPR036465">
    <property type="entry name" value="vWFA_dom_sf"/>
</dbReference>
<dbReference type="PANTHER" id="PTHR10068">
    <property type="entry name" value="BONE MARROW PROTEOGLYCAN"/>
    <property type="match status" value="1"/>
</dbReference>
<dbReference type="PANTHER" id="PTHR10068:SF14">
    <property type="entry name" value="CELL WALL ADHESIN EAP1"/>
    <property type="match status" value="1"/>
</dbReference>
<dbReference type="Pfam" id="PF00090">
    <property type="entry name" value="TSP_1"/>
    <property type="match status" value="1"/>
</dbReference>
<dbReference type="Pfam" id="PF00092">
    <property type="entry name" value="VWA"/>
    <property type="match status" value="1"/>
</dbReference>
<dbReference type="SMART" id="SM00209">
    <property type="entry name" value="TSP1"/>
    <property type="match status" value="1"/>
</dbReference>
<dbReference type="SMART" id="SM00327">
    <property type="entry name" value="VWA"/>
    <property type="match status" value="1"/>
</dbReference>
<dbReference type="SUPFAM" id="SSF82895">
    <property type="entry name" value="TSP-1 type 1 repeat"/>
    <property type="match status" value="1"/>
</dbReference>
<dbReference type="SUPFAM" id="SSF53300">
    <property type="entry name" value="vWA-like"/>
    <property type="match status" value="1"/>
</dbReference>
<dbReference type="PROSITE" id="PS50092">
    <property type="entry name" value="TSP1"/>
    <property type="match status" value="1"/>
</dbReference>
<dbReference type="PROSITE" id="PS50234">
    <property type="entry name" value="VWFA"/>
    <property type="match status" value="1"/>
</dbReference>
<reference key="1">
    <citation type="journal article" date="1992" name="Mol. Biochem. Parasitol.">
        <title>Characterization of the gene encoding sporozoite surface protein 2, a protective Plasmodium yoelii sporozoite antigen.</title>
        <authorList>
            <person name="Rogers W.O."/>
            <person name="Rogers M.D."/>
            <person name="Hedstrom R.C."/>
            <person name="Hoffman S.L."/>
        </authorList>
    </citation>
    <scope>NUCLEOTIDE SEQUENCE [GENOMIC DNA]</scope>
</reference>
<reference key="2">
    <citation type="journal article" date="2002" name="Nature">
        <title>Genome sequence and comparative analysis of the model rodent malaria parasite Plasmodium yoelii yoelii.</title>
        <authorList>
            <person name="Carlton J.M."/>
            <person name="Angiuoli S.V."/>
            <person name="Suh B.B."/>
            <person name="Kooij T.W."/>
            <person name="Pertea M."/>
            <person name="Silva J.C."/>
            <person name="Ermolaeva M.D."/>
            <person name="Allen J.E."/>
            <person name="Selengut J.D."/>
            <person name="Koo H.L."/>
            <person name="Peterson J.D."/>
            <person name="Pop M."/>
            <person name="Kosack D.S."/>
            <person name="Shumway M.F."/>
            <person name="Bidwell S.L."/>
            <person name="Shallom S.J."/>
            <person name="van Aken S.E."/>
            <person name="Riedmuller S.B."/>
            <person name="Feldblyum T.V."/>
            <person name="Cho J.K."/>
            <person name="Quackenbush J."/>
            <person name="Sedegah M."/>
            <person name="Shoaibi A."/>
            <person name="Cummings L.M."/>
            <person name="Florens L."/>
            <person name="Yates J.R. III"/>
            <person name="Raine J.D."/>
            <person name="Sinden R.E."/>
            <person name="Harris M.A."/>
            <person name="Cunningham D.A."/>
            <person name="Preiser P.R."/>
            <person name="Bergman L.W."/>
            <person name="Vaidya A.B."/>
            <person name="van Lin L.H."/>
            <person name="Janse C.J."/>
            <person name="Waters A.P."/>
            <person name="Smith H.O."/>
            <person name="White O.R."/>
            <person name="Salzberg S.L."/>
            <person name="Venter J.C."/>
            <person name="Fraser C.M."/>
            <person name="Hoffman S.L."/>
            <person name="Gardner M.J."/>
            <person name="Carucci D.J."/>
        </authorList>
    </citation>
    <scope>NUCLEOTIDE SEQUENCE [LARGE SCALE GENOMIC DNA]</scope>
    <source>
        <strain>17XNL</strain>
    </source>
</reference>
<reference key="3">
    <citation type="journal article" date="1990" name="Bull. World Health Organ.">
        <title>A malaria sporozoite surface antigen distinct from the circumsporozoite protein.</title>
        <authorList>
            <person name="Hedstrom R.C."/>
            <person name="Campbell J.R."/>
            <person name="Leef M.L."/>
            <person name="Charoenvit Y."/>
            <person name="Carter M."/>
            <person name="Sedegah M."/>
            <person name="Beaudoin R.L."/>
            <person name="Hoffman S.L."/>
        </authorList>
    </citation>
    <scope>PROTEIN SEQUENCE OF 562-567</scope>
</reference>
<sequence length="827" mass="91299">MKLLGNSKYIFVVLLLCISVFLNGQETLDEIKYSEEVCTEQIDIHILLDGSGSIGYSNWKAHVIPMLNTLVDNLNISNDEINVSLTLFSTNSRELIKLKGYGSTSKDSLRFILAHLQNNYSPNGNTNLTSALLVVDTLINERMYRPDAIQLAIILTDGIPNDLPRSTAVVHQLKRKHVNVAIIGVGAGVNNEYNRILVGCDRYAPCPYYSSGSWNEAQNMIKPFLTKVCQEVERIAHCGKWEEWSECSTTCDEGRKIRRRQILHPGCVSEMTTPCKVRDCPQIPIPPVIPNKIPEKPSNPEEPVNPNDPNDPNNPNNPNNPNNPNNPNNPNNPNNPNNPNNPNNPNNPNNPNNPNNPNNPNNPNNPNNPNNPNNPNNPNNPNDPSNPNNPNPKKRNPKRRNPNKPKPNKPNPNKPNPNEPSNPNKPNPNEPSNPNKPNPNEPSNPNKPNPNEPSNPNKPNPNEPLNPNEPSNPNEPSNPNAPSNPNEPSNPNEPSNPNEPSNPNEPSNPNEPSNPKKPSNPNEPSNPNEPLNPNEPSNPNEPSNPNEPSNPEEPSNPKEPSNPNEPSNPEEPNPEEPSNPKEPSNPEEPINPEELNPKEPSNPEESNPKEPINPEESNPKEPINPEDNENPLIIQDEPIEPRNDSNVIPILPIIPQKGNNIPSNLPENPSDSEVEYPRPNDNGENSNNTMKSKKNIPNEPIPSPGDNPYKGHEERIPKPHRSNDDYVYDNNVNKNNKDEPEIPNNEYEEDKNKNQSKSNNGYKIAGGIIGGLAILGCAGVGYNFIAGSSAAGLAGAEPAPFEDVIPDDDKDIVENEQFKLPEDNDWN</sequence>
<proteinExistence type="evidence at protein level"/>
<protein>
    <recommendedName>
        <fullName>Sporozoite surface protein 2</fullName>
    </recommendedName>
</protein>
<evidence type="ECO:0000255" key="1"/>
<evidence type="ECO:0000255" key="2">
    <source>
        <dbReference type="PROSITE-ProRule" id="PRU00210"/>
    </source>
</evidence>
<evidence type="ECO:0000255" key="3">
    <source>
        <dbReference type="PROSITE-ProRule" id="PRU00219"/>
    </source>
</evidence>
<evidence type="ECO:0000256" key="4">
    <source>
        <dbReference type="SAM" id="MobiDB-lite"/>
    </source>
</evidence>
<evidence type="ECO:0000305" key="5"/>
<name>SSP2_PLAYO</name>
<keyword id="KW-1003">Cell membrane</keyword>
<keyword id="KW-0903">Direct protein sequencing</keyword>
<keyword id="KW-1015">Disulfide bond</keyword>
<keyword id="KW-0461">Malaria</keyword>
<keyword id="KW-0472">Membrane</keyword>
<keyword id="KW-1185">Reference proteome</keyword>
<keyword id="KW-0677">Repeat</keyword>
<keyword id="KW-0732">Signal</keyword>
<keyword id="KW-0748">Sporozoite</keyword>
<keyword id="KW-0812">Transmembrane</keyword>
<keyword id="KW-1133">Transmembrane helix</keyword>
<accession>Q01443</accession>
<accession>Q7RK51</accession>